<organism>
    <name type="scientific">Chlorobaculum tepidum (strain ATCC 49652 / DSM 12025 / NBRC 103806 / TLS)</name>
    <name type="common">Chlorobium tepidum</name>
    <dbReference type="NCBI Taxonomy" id="194439"/>
    <lineage>
        <taxon>Bacteria</taxon>
        <taxon>Pseudomonadati</taxon>
        <taxon>Chlorobiota</taxon>
        <taxon>Chlorobiia</taxon>
        <taxon>Chlorobiales</taxon>
        <taxon>Chlorobiaceae</taxon>
        <taxon>Chlorobaculum</taxon>
    </lineage>
</organism>
<reference key="1">
    <citation type="journal article" date="2002" name="Proc. Natl. Acad. Sci. U.S.A.">
        <title>The complete genome sequence of Chlorobium tepidum TLS, a photosynthetic, anaerobic, green-sulfur bacterium.</title>
        <authorList>
            <person name="Eisen J.A."/>
            <person name="Nelson K.E."/>
            <person name="Paulsen I.T."/>
            <person name="Heidelberg J.F."/>
            <person name="Wu M."/>
            <person name="Dodson R.J."/>
            <person name="DeBoy R.T."/>
            <person name="Gwinn M.L."/>
            <person name="Nelson W.C."/>
            <person name="Haft D.H."/>
            <person name="Hickey E.K."/>
            <person name="Peterson J.D."/>
            <person name="Durkin A.S."/>
            <person name="Kolonay J.F."/>
            <person name="Yang F."/>
            <person name="Holt I.E."/>
            <person name="Umayam L.A."/>
            <person name="Mason T.M."/>
            <person name="Brenner M."/>
            <person name="Shea T.P."/>
            <person name="Parksey D.S."/>
            <person name="Nierman W.C."/>
            <person name="Feldblyum T.V."/>
            <person name="Hansen C.L."/>
            <person name="Craven M.B."/>
            <person name="Radune D."/>
            <person name="Vamathevan J.J."/>
            <person name="Khouri H.M."/>
            <person name="White O."/>
            <person name="Gruber T.M."/>
            <person name="Ketchum K.A."/>
            <person name="Venter J.C."/>
            <person name="Tettelin H."/>
            <person name="Bryant D.A."/>
            <person name="Fraser C.M."/>
        </authorList>
    </citation>
    <scope>NUCLEOTIDE SEQUENCE [LARGE SCALE GENOMIC DNA]</scope>
    <source>
        <strain>ATCC 49652 / DSM 12025 / NBRC 103806 / TLS</strain>
    </source>
</reference>
<comment type="function">
    <text evidence="1">Associates with the EF-Tu.GDP complex and induces the exchange of GDP to GTP. It remains bound to the aminoacyl-tRNA.EF-Tu.GTP complex up to the GTP hydrolysis stage on the ribosome.</text>
</comment>
<comment type="subcellular location">
    <subcellularLocation>
        <location evidence="1">Cytoplasm</location>
    </subcellularLocation>
</comment>
<comment type="similarity">
    <text evidence="1">Belongs to the EF-Ts family.</text>
</comment>
<proteinExistence type="inferred from homology"/>
<evidence type="ECO:0000255" key="1">
    <source>
        <dbReference type="HAMAP-Rule" id="MF_00050"/>
    </source>
</evidence>
<keyword id="KW-0963">Cytoplasm</keyword>
<keyword id="KW-0251">Elongation factor</keyword>
<keyword id="KW-0648">Protein biosynthesis</keyword>
<keyword id="KW-1185">Reference proteome</keyword>
<accession>Q8KBK7</accession>
<feature type="chain" id="PRO_0000161104" description="Elongation factor Ts">
    <location>
        <begin position="1"/>
        <end position="288"/>
    </location>
</feature>
<feature type="region of interest" description="Involved in Mg(2+) ion dislocation from EF-Tu" evidence="1">
    <location>
        <begin position="82"/>
        <end position="85"/>
    </location>
</feature>
<gene>
    <name evidence="1" type="primary">tsf</name>
    <name type="ordered locus">CT1780</name>
</gene>
<dbReference type="EMBL" id="AE006470">
    <property type="protein sequence ID" value="AAM73001.1"/>
    <property type="molecule type" value="Genomic_DNA"/>
</dbReference>
<dbReference type="RefSeq" id="NP_662659.1">
    <property type="nucleotide sequence ID" value="NC_002932.3"/>
</dbReference>
<dbReference type="RefSeq" id="WP_010933440.1">
    <property type="nucleotide sequence ID" value="NC_002932.3"/>
</dbReference>
<dbReference type="SMR" id="Q8KBK7"/>
<dbReference type="STRING" id="194439.CT1780"/>
<dbReference type="EnsemblBacteria" id="AAM73001">
    <property type="protein sequence ID" value="AAM73001"/>
    <property type="gene ID" value="CT1780"/>
</dbReference>
<dbReference type="KEGG" id="cte:CT1780"/>
<dbReference type="PATRIC" id="fig|194439.7.peg.1614"/>
<dbReference type="eggNOG" id="COG0264">
    <property type="taxonomic scope" value="Bacteria"/>
</dbReference>
<dbReference type="HOGENOM" id="CLU_047155_0_0_10"/>
<dbReference type="OrthoDB" id="9808348at2"/>
<dbReference type="Proteomes" id="UP000001007">
    <property type="component" value="Chromosome"/>
</dbReference>
<dbReference type="GO" id="GO:0005737">
    <property type="term" value="C:cytoplasm"/>
    <property type="evidence" value="ECO:0007669"/>
    <property type="project" value="UniProtKB-SubCell"/>
</dbReference>
<dbReference type="GO" id="GO:0003746">
    <property type="term" value="F:translation elongation factor activity"/>
    <property type="evidence" value="ECO:0007669"/>
    <property type="project" value="UniProtKB-UniRule"/>
</dbReference>
<dbReference type="CDD" id="cd14275">
    <property type="entry name" value="UBA_EF-Ts"/>
    <property type="match status" value="1"/>
</dbReference>
<dbReference type="FunFam" id="1.10.286.20:FF:000001">
    <property type="entry name" value="Elongation factor Ts"/>
    <property type="match status" value="1"/>
</dbReference>
<dbReference type="FunFam" id="1.10.8.10:FF:000001">
    <property type="entry name" value="Elongation factor Ts"/>
    <property type="match status" value="1"/>
</dbReference>
<dbReference type="Gene3D" id="1.10.286.20">
    <property type="match status" value="1"/>
</dbReference>
<dbReference type="Gene3D" id="1.10.8.10">
    <property type="entry name" value="DNA helicase RuvA subunit, C-terminal domain"/>
    <property type="match status" value="1"/>
</dbReference>
<dbReference type="Gene3D" id="3.30.479.20">
    <property type="entry name" value="Elongation factor Ts, dimerisation domain"/>
    <property type="match status" value="2"/>
</dbReference>
<dbReference type="HAMAP" id="MF_00050">
    <property type="entry name" value="EF_Ts"/>
    <property type="match status" value="1"/>
</dbReference>
<dbReference type="InterPro" id="IPR036402">
    <property type="entry name" value="EF-Ts_dimer_sf"/>
</dbReference>
<dbReference type="InterPro" id="IPR001816">
    <property type="entry name" value="Transl_elong_EFTs/EF1B"/>
</dbReference>
<dbReference type="InterPro" id="IPR014039">
    <property type="entry name" value="Transl_elong_EFTs/EF1B_dimer"/>
</dbReference>
<dbReference type="InterPro" id="IPR018101">
    <property type="entry name" value="Transl_elong_Ts_CS"/>
</dbReference>
<dbReference type="InterPro" id="IPR009060">
    <property type="entry name" value="UBA-like_sf"/>
</dbReference>
<dbReference type="NCBIfam" id="TIGR00116">
    <property type="entry name" value="tsf"/>
    <property type="match status" value="1"/>
</dbReference>
<dbReference type="PANTHER" id="PTHR11741">
    <property type="entry name" value="ELONGATION FACTOR TS"/>
    <property type="match status" value="1"/>
</dbReference>
<dbReference type="PANTHER" id="PTHR11741:SF0">
    <property type="entry name" value="ELONGATION FACTOR TS, MITOCHONDRIAL"/>
    <property type="match status" value="1"/>
</dbReference>
<dbReference type="Pfam" id="PF00889">
    <property type="entry name" value="EF_TS"/>
    <property type="match status" value="1"/>
</dbReference>
<dbReference type="SUPFAM" id="SSF54713">
    <property type="entry name" value="Elongation factor Ts (EF-Ts), dimerisation domain"/>
    <property type="match status" value="2"/>
</dbReference>
<dbReference type="SUPFAM" id="SSF46934">
    <property type="entry name" value="UBA-like"/>
    <property type="match status" value="1"/>
</dbReference>
<dbReference type="PROSITE" id="PS01126">
    <property type="entry name" value="EF_TS_1"/>
    <property type="match status" value="1"/>
</dbReference>
<dbReference type="PROSITE" id="PS01127">
    <property type="entry name" value="EF_TS_2"/>
    <property type="match status" value="1"/>
</dbReference>
<protein>
    <recommendedName>
        <fullName evidence="1">Elongation factor Ts</fullName>
        <shortName evidence="1">EF-Ts</shortName>
    </recommendedName>
</protein>
<sequence>MSQISAKDVKELRDTTGVGMMECKKALEETGGDMQKAVEYLRKKGAAMAAKRADREASEGVVCILMSDDQKTGVILELNCETDFVARGEVFTGFANELATLALSNNCESREDLLGIKLGEAYGNETVEEALKSMTGKVGEKLELKRMARLTAEAGVLESYIHPGSQLGALIAIDTDKPAEAKALAKDLAMQVAAAAPIEVSRDAVSTELVEKEKEIYRQQALAEGKKEEFVDKIVMGRLNKYYQEVVLTEQTFIKDQNTKVSGVLDDFMKKNQAQVKVKAFVRYQLGA</sequence>
<name>EFTS_CHLTE</name>